<feature type="chain" id="PRO_1000137897" description="Bifunctional protein Aas">
    <location>
        <begin position="1"/>
        <end position="719"/>
    </location>
</feature>
<feature type="transmembrane region" description="Helical" evidence="1">
    <location>
        <begin position="258"/>
        <end position="277"/>
    </location>
</feature>
<feature type="transmembrane region" description="Helical" evidence="1">
    <location>
        <begin position="409"/>
        <end position="433"/>
    </location>
</feature>
<feature type="region of interest" description="Acyltransferase">
    <location>
        <begin position="15"/>
        <end position="138"/>
    </location>
</feature>
<feature type="region of interest" description="AMP-binding">
    <location>
        <begin position="233"/>
        <end position="646"/>
    </location>
</feature>
<feature type="active site" evidence="1">
    <location>
        <position position="36"/>
    </location>
</feature>
<keyword id="KW-0012">Acyltransferase</keyword>
<keyword id="KW-0067">ATP-binding</keyword>
<keyword id="KW-0997">Cell inner membrane</keyword>
<keyword id="KW-1003">Cell membrane</keyword>
<keyword id="KW-0436">Ligase</keyword>
<keyword id="KW-0472">Membrane</keyword>
<keyword id="KW-0511">Multifunctional enzyme</keyword>
<keyword id="KW-0547">Nucleotide-binding</keyword>
<keyword id="KW-0808">Transferase</keyword>
<keyword id="KW-0812">Transmembrane</keyword>
<keyword id="KW-1133">Transmembrane helix</keyword>
<accession>B5QWU2</accession>
<gene>
    <name evidence="1" type="primary">aas</name>
    <name type="ordered locus">SEN2853</name>
</gene>
<proteinExistence type="inferred from homology"/>
<protein>
    <recommendedName>
        <fullName evidence="1">Bifunctional protein Aas</fullName>
    </recommendedName>
    <domain>
        <recommendedName>
            <fullName evidence="1">2-acylglycerophosphoethanolamine acyltransferase</fullName>
            <ecNumber evidence="1">2.3.1.40</ecNumber>
        </recommendedName>
        <alternativeName>
            <fullName evidence="1">2-acyl-GPE acyltransferase</fullName>
        </alternativeName>
        <alternativeName>
            <fullName evidence="1">Acyl-[acyl-carrier-protein]--phospholipid O-acyltransferase</fullName>
        </alternativeName>
    </domain>
    <domain>
        <recommendedName>
            <fullName evidence="1">Acyl-[acyl-carrier-protein] synthetase</fullName>
            <ecNumber evidence="1">6.2.1.20</ecNumber>
        </recommendedName>
        <alternativeName>
            <fullName evidence="1">Acyl-ACP synthetase</fullName>
        </alternativeName>
        <alternativeName>
            <fullName evidence="1">Long-chain-fatty-acid--[acyl-carrier-protein] ligase</fullName>
        </alternativeName>
    </domain>
</protein>
<organism>
    <name type="scientific">Salmonella enteritidis PT4 (strain P125109)</name>
    <dbReference type="NCBI Taxonomy" id="550537"/>
    <lineage>
        <taxon>Bacteria</taxon>
        <taxon>Pseudomonadati</taxon>
        <taxon>Pseudomonadota</taxon>
        <taxon>Gammaproteobacteria</taxon>
        <taxon>Enterobacterales</taxon>
        <taxon>Enterobacteriaceae</taxon>
        <taxon>Salmonella</taxon>
    </lineage>
</organism>
<sequence length="719" mass="80493">MLFGFFRNLFRVLYRVRVTGDVRALQGNRVLITPNHVSFIDGMLLALFLPVRPVFAVYTSISQQWYMRWLTPLIDFVPLDPTKPMSIKHLVRLVEQGRPVVIFPEGRISVTGSLMKIYDGAGFVAAKSGATVIPLRIDGAELTPFSRLKGLVKRRLFPRIQLHILPPTQIPMPEAPRARDRRKIAGEMLHQIMMEARMAVRPRETLYESLLAAQYRYGAGKNCIEDINFTPDTYRKLLTKTLFVGRILEKYSVEGEKIGLMLPNAAISAAVIFGAVSRRRIPAMMNYTAGVKGLTSAITAAEIKTIFTSRQFLDKGKLWHLPEQLTQVRWVYLEDLKADVTPADKLWIFAHLLAPRLAQVKQQPEDAAIILFTSGSEGHPKGVVHSHKSILANVEQIKTIADFTANDRFMSALPLFHSFGLTVGLFTPLLTGAEVFLYPSPLHYRIVPELVYDRNCTVLFGTSTFLGNYARFANPYDFYRLRYVVAGAEKLQESTKQLWQDKFGLRILEGYGVTECAPVVSINVPMAAKPGTVGRILPGMDARLLAVPGIENGGRLQLKGPNIMNGYLRVEKPGVLEVPSAENARGETERGWYDTGDIVRFDENGFVQIQGRAKRFAKIAGEMVSLEMVEQLALGVSADKMHATAIKSDASKGEALVLFTTDSELTREKLQHYAREHGIPELAVPRDIRYLKQLPLLGSGKPDFVTLKSWVDAPEQHHE</sequence>
<dbReference type="EC" id="2.3.1.40" evidence="1"/>
<dbReference type="EC" id="6.2.1.20" evidence="1"/>
<dbReference type="EMBL" id="AM933172">
    <property type="protein sequence ID" value="CAR34431.1"/>
    <property type="molecule type" value="Genomic_DNA"/>
</dbReference>
<dbReference type="RefSeq" id="WP_000896101.1">
    <property type="nucleotide sequence ID" value="NC_011294.1"/>
</dbReference>
<dbReference type="SMR" id="B5QWU2"/>
<dbReference type="KEGG" id="set:SEN2853"/>
<dbReference type="HOGENOM" id="CLU_000022_59_8_6"/>
<dbReference type="Proteomes" id="UP000000613">
    <property type="component" value="Chromosome"/>
</dbReference>
<dbReference type="GO" id="GO:0005886">
    <property type="term" value="C:plasma membrane"/>
    <property type="evidence" value="ECO:0007669"/>
    <property type="project" value="UniProtKB-SubCell"/>
</dbReference>
<dbReference type="GO" id="GO:0008779">
    <property type="term" value="F:acyl-[acyl-carrier-protein]-phospholipid O-acyltransferase activity"/>
    <property type="evidence" value="ECO:0007669"/>
    <property type="project" value="UniProtKB-UniRule"/>
</dbReference>
<dbReference type="GO" id="GO:0005524">
    <property type="term" value="F:ATP binding"/>
    <property type="evidence" value="ECO:0007669"/>
    <property type="project" value="UniProtKB-KW"/>
</dbReference>
<dbReference type="GO" id="GO:0008922">
    <property type="term" value="F:long-chain fatty acid [acyl-carrier-protein] ligase activity"/>
    <property type="evidence" value="ECO:0007669"/>
    <property type="project" value="UniProtKB-UniRule"/>
</dbReference>
<dbReference type="GO" id="GO:0031956">
    <property type="term" value="F:medium-chain fatty acid-CoA ligase activity"/>
    <property type="evidence" value="ECO:0007669"/>
    <property type="project" value="TreeGrafter"/>
</dbReference>
<dbReference type="GO" id="GO:0006631">
    <property type="term" value="P:fatty acid metabolic process"/>
    <property type="evidence" value="ECO:0007669"/>
    <property type="project" value="InterPro"/>
</dbReference>
<dbReference type="GO" id="GO:0008654">
    <property type="term" value="P:phospholipid biosynthetic process"/>
    <property type="evidence" value="ECO:0007669"/>
    <property type="project" value="InterPro"/>
</dbReference>
<dbReference type="CDD" id="cd05909">
    <property type="entry name" value="AAS_C"/>
    <property type="match status" value="1"/>
</dbReference>
<dbReference type="CDD" id="cd07989">
    <property type="entry name" value="LPLAT_AGPAT-like"/>
    <property type="match status" value="1"/>
</dbReference>
<dbReference type="FunFam" id="3.30.300.30:FF:000009">
    <property type="entry name" value="Bifunctional protein Aas"/>
    <property type="match status" value="1"/>
</dbReference>
<dbReference type="FunFam" id="3.40.50.12780:FF:000009">
    <property type="entry name" value="Bifunctional protein Aas"/>
    <property type="match status" value="1"/>
</dbReference>
<dbReference type="Gene3D" id="3.30.300.30">
    <property type="match status" value="1"/>
</dbReference>
<dbReference type="Gene3D" id="3.40.50.12780">
    <property type="entry name" value="N-terminal domain of ligase-like"/>
    <property type="match status" value="1"/>
</dbReference>
<dbReference type="HAMAP" id="MF_01162">
    <property type="entry name" value="Aas"/>
    <property type="match status" value="1"/>
</dbReference>
<dbReference type="InterPro" id="IPR023775">
    <property type="entry name" value="Aas"/>
</dbReference>
<dbReference type="InterPro" id="IPR045851">
    <property type="entry name" value="AMP-bd_C_sf"/>
</dbReference>
<dbReference type="InterPro" id="IPR020845">
    <property type="entry name" value="AMP-binding_CS"/>
</dbReference>
<dbReference type="InterPro" id="IPR000873">
    <property type="entry name" value="AMP-dep_synth/lig_dom"/>
</dbReference>
<dbReference type="InterPro" id="IPR042099">
    <property type="entry name" value="ANL_N_sf"/>
</dbReference>
<dbReference type="InterPro" id="IPR002123">
    <property type="entry name" value="Plipid/glycerol_acylTrfase"/>
</dbReference>
<dbReference type="NCBIfam" id="NF005959">
    <property type="entry name" value="PRK08043.1"/>
    <property type="match status" value="1"/>
</dbReference>
<dbReference type="PANTHER" id="PTHR43201">
    <property type="entry name" value="ACYL-COA SYNTHETASE"/>
    <property type="match status" value="1"/>
</dbReference>
<dbReference type="PANTHER" id="PTHR43201:SF8">
    <property type="entry name" value="ACYL-COA SYNTHETASE FAMILY MEMBER 3"/>
    <property type="match status" value="1"/>
</dbReference>
<dbReference type="Pfam" id="PF01553">
    <property type="entry name" value="Acyltransferase"/>
    <property type="match status" value="1"/>
</dbReference>
<dbReference type="Pfam" id="PF00501">
    <property type="entry name" value="AMP-binding"/>
    <property type="match status" value="1"/>
</dbReference>
<dbReference type="SMART" id="SM00563">
    <property type="entry name" value="PlsC"/>
    <property type="match status" value="1"/>
</dbReference>
<dbReference type="SUPFAM" id="SSF56801">
    <property type="entry name" value="Acetyl-CoA synthetase-like"/>
    <property type="match status" value="1"/>
</dbReference>
<dbReference type="SUPFAM" id="SSF69593">
    <property type="entry name" value="Glycerol-3-phosphate (1)-acyltransferase"/>
    <property type="match status" value="1"/>
</dbReference>
<dbReference type="PROSITE" id="PS00455">
    <property type="entry name" value="AMP_BINDING"/>
    <property type="match status" value="1"/>
</dbReference>
<evidence type="ECO:0000255" key="1">
    <source>
        <dbReference type="HAMAP-Rule" id="MF_01162"/>
    </source>
</evidence>
<name>AAS_SALEP</name>
<reference key="1">
    <citation type="journal article" date="2008" name="Genome Res.">
        <title>Comparative genome analysis of Salmonella enteritidis PT4 and Salmonella gallinarum 287/91 provides insights into evolutionary and host adaptation pathways.</title>
        <authorList>
            <person name="Thomson N.R."/>
            <person name="Clayton D.J."/>
            <person name="Windhorst D."/>
            <person name="Vernikos G."/>
            <person name="Davidson S."/>
            <person name="Churcher C."/>
            <person name="Quail M.A."/>
            <person name="Stevens M."/>
            <person name="Jones M.A."/>
            <person name="Watson M."/>
            <person name="Barron A."/>
            <person name="Layton A."/>
            <person name="Pickard D."/>
            <person name="Kingsley R.A."/>
            <person name="Bignell A."/>
            <person name="Clark L."/>
            <person name="Harris B."/>
            <person name="Ormond D."/>
            <person name="Abdellah Z."/>
            <person name="Brooks K."/>
            <person name="Cherevach I."/>
            <person name="Chillingworth T."/>
            <person name="Woodward J."/>
            <person name="Norberczak H."/>
            <person name="Lord A."/>
            <person name="Arrowsmith C."/>
            <person name="Jagels K."/>
            <person name="Moule S."/>
            <person name="Mungall K."/>
            <person name="Saunders M."/>
            <person name="Whitehead S."/>
            <person name="Chabalgoity J.A."/>
            <person name="Maskell D."/>
            <person name="Humphreys T."/>
            <person name="Roberts M."/>
            <person name="Barrow P.A."/>
            <person name="Dougan G."/>
            <person name="Parkhill J."/>
        </authorList>
    </citation>
    <scope>NUCLEOTIDE SEQUENCE [LARGE SCALE GENOMIC DNA]</scope>
    <source>
        <strain>P125109</strain>
    </source>
</reference>
<comment type="function">
    <text evidence="1">Plays a role in lysophospholipid acylation. Transfers fatty acids to the 1-position via an enzyme-bound acyl-ACP intermediate in the presence of ATP and magnesium. Its physiological function is to regenerate phosphatidylethanolamine from 2-acyl-glycero-3-phosphoethanolamine (2-acyl-GPE) formed by transacylation reactions or degradation by phospholipase A1.</text>
</comment>
<comment type="catalytic activity">
    <reaction evidence="1">
        <text>a 2-acyl-sn-glycero-3-phosphoethanolamine + a fatty acyl-[ACP] = a 1,2-diacyl-sn-glycero-3-phosphoethanolamine + holo-[ACP]</text>
        <dbReference type="Rhea" id="RHEA:10304"/>
        <dbReference type="Rhea" id="RHEA-COMP:9685"/>
        <dbReference type="Rhea" id="RHEA-COMP:14125"/>
        <dbReference type="ChEBI" id="CHEBI:64479"/>
        <dbReference type="ChEBI" id="CHEBI:64612"/>
        <dbReference type="ChEBI" id="CHEBI:65213"/>
        <dbReference type="ChEBI" id="CHEBI:138651"/>
        <dbReference type="EC" id="2.3.1.40"/>
    </reaction>
</comment>
<comment type="catalytic activity">
    <reaction evidence="1">
        <text>a long-chain fatty acid + holo-[ACP] + ATP = a long-chain fatty acyl-[ACP] + AMP + diphosphate</text>
        <dbReference type="Rhea" id="RHEA:45588"/>
        <dbReference type="Rhea" id="RHEA-COMP:9685"/>
        <dbReference type="Rhea" id="RHEA-COMP:12682"/>
        <dbReference type="ChEBI" id="CHEBI:30616"/>
        <dbReference type="ChEBI" id="CHEBI:33019"/>
        <dbReference type="ChEBI" id="CHEBI:57560"/>
        <dbReference type="ChEBI" id="CHEBI:64479"/>
        <dbReference type="ChEBI" id="CHEBI:133243"/>
        <dbReference type="ChEBI" id="CHEBI:456215"/>
        <dbReference type="EC" id="6.2.1.20"/>
    </reaction>
</comment>
<comment type="subcellular location">
    <subcellularLocation>
        <location evidence="1">Cell inner membrane</location>
        <topology evidence="1">Multi-pass membrane protein</topology>
    </subcellularLocation>
</comment>
<comment type="similarity">
    <text evidence="1">In the N-terminal section; belongs to the 2-acyl-GPE acetyltransferase family.</text>
</comment>
<comment type="similarity">
    <text evidence="1">In the C-terminal section; belongs to the ATP-dependent AMP-binding enzyme family.</text>
</comment>